<keyword id="KW-0342">GTP-binding</keyword>
<keyword id="KW-0378">Hydrolase</keyword>
<keyword id="KW-0460">Magnesium</keyword>
<keyword id="KW-0479">Metal-binding</keyword>
<keyword id="KW-0489">Methyltransferase</keyword>
<keyword id="KW-0506">mRNA capping</keyword>
<keyword id="KW-0507">mRNA processing</keyword>
<keyword id="KW-0511">Multifunctional enzyme</keyword>
<keyword id="KW-0547">Nucleotide-binding</keyword>
<keyword id="KW-0548">Nucleotidyltransferase</keyword>
<keyword id="KW-1185">Reference proteome</keyword>
<keyword id="KW-0694">RNA-binding</keyword>
<keyword id="KW-0949">S-adenosyl-L-methionine</keyword>
<keyword id="KW-0808">Transferase</keyword>
<keyword id="KW-0946">Virion</keyword>
<name>MCEL_CAMPS</name>
<dbReference type="EC" id="3.6.1.74"/>
<dbReference type="EC" id="2.7.7.50"/>
<dbReference type="EC" id="2.1.1.56"/>
<dbReference type="EMBL" id="AY009089">
    <property type="protein sequence ID" value="AAG37576.1"/>
    <property type="molecule type" value="Genomic_DNA"/>
</dbReference>
<dbReference type="SMR" id="Q775U0"/>
<dbReference type="Proteomes" id="UP000107153">
    <property type="component" value="Genome"/>
</dbReference>
<dbReference type="GO" id="GO:0044423">
    <property type="term" value="C:virion component"/>
    <property type="evidence" value="ECO:0007669"/>
    <property type="project" value="UniProtKB-KW"/>
</dbReference>
<dbReference type="GO" id="GO:0005525">
    <property type="term" value="F:GTP binding"/>
    <property type="evidence" value="ECO:0007669"/>
    <property type="project" value="UniProtKB-KW"/>
</dbReference>
<dbReference type="GO" id="GO:0050355">
    <property type="term" value="F:inorganic triphosphate phosphatase activity"/>
    <property type="evidence" value="ECO:0007669"/>
    <property type="project" value="InterPro"/>
</dbReference>
<dbReference type="GO" id="GO:0046872">
    <property type="term" value="F:metal ion binding"/>
    <property type="evidence" value="ECO:0007669"/>
    <property type="project" value="UniProtKB-KW"/>
</dbReference>
<dbReference type="GO" id="GO:0004482">
    <property type="term" value="F:mRNA 5'-cap (guanine-N7-)-methyltransferase activity"/>
    <property type="evidence" value="ECO:0007669"/>
    <property type="project" value="UniProtKB-EC"/>
</dbReference>
<dbReference type="GO" id="GO:0140818">
    <property type="term" value="F:mRNA 5'-triphosphate monophosphatase activity"/>
    <property type="evidence" value="ECO:0007669"/>
    <property type="project" value="RHEA"/>
</dbReference>
<dbReference type="GO" id="GO:0004484">
    <property type="term" value="F:mRNA guanylyltransferase activity"/>
    <property type="evidence" value="ECO:0007669"/>
    <property type="project" value="UniProtKB-EC"/>
</dbReference>
<dbReference type="GO" id="GO:0004651">
    <property type="term" value="F:polynucleotide 5'-phosphatase activity"/>
    <property type="evidence" value="ECO:0007669"/>
    <property type="project" value="UniProtKB-EC"/>
</dbReference>
<dbReference type="GO" id="GO:0003723">
    <property type="term" value="F:RNA binding"/>
    <property type="evidence" value="ECO:0007669"/>
    <property type="project" value="UniProtKB-KW"/>
</dbReference>
<dbReference type="FunFam" id="3.30.470.140:FF:000001">
    <property type="entry name" value="mRNA-capping enzyme catalytic subunit"/>
    <property type="match status" value="1"/>
</dbReference>
<dbReference type="FunFam" id="3.40.50.150:FF:000307">
    <property type="entry name" value="mRNA-capping enzyme catalytic subunit"/>
    <property type="match status" value="1"/>
</dbReference>
<dbReference type="Gene3D" id="2.40.50.830">
    <property type="match status" value="1"/>
</dbReference>
<dbReference type="Gene3D" id="3.20.100.20">
    <property type="match status" value="1"/>
</dbReference>
<dbReference type="Gene3D" id="3.30.470.140">
    <property type="match status" value="1"/>
</dbReference>
<dbReference type="Gene3D" id="3.40.50.150">
    <property type="entry name" value="Vaccinia Virus protein VP39"/>
    <property type="match status" value="1"/>
</dbReference>
<dbReference type="InterPro" id="IPR048425">
    <property type="entry name" value="MCEL_GT_NTPase"/>
</dbReference>
<dbReference type="InterPro" id="IPR048426">
    <property type="entry name" value="MCEL_GT_OB"/>
</dbReference>
<dbReference type="InterPro" id="IPR046429">
    <property type="entry name" value="MCEL_NTPase_sf"/>
</dbReference>
<dbReference type="InterPro" id="IPR046428">
    <property type="entry name" value="MCEL_OB_dom_sf"/>
</dbReference>
<dbReference type="InterPro" id="IPR019602">
    <property type="entry name" value="MCEL_TPase"/>
</dbReference>
<dbReference type="InterPro" id="IPR046430">
    <property type="entry name" value="MCEL_TPase_sf"/>
</dbReference>
<dbReference type="InterPro" id="IPR004971">
    <property type="entry name" value="mRNA_G-N7_MeTrfase_dom"/>
</dbReference>
<dbReference type="InterPro" id="IPR039753">
    <property type="entry name" value="RG7MT1"/>
</dbReference>
<dbReference type="InterPro" id="IPR029063">
    <property type="entry name" value="SAM-dependent_MTases_sf"/>
</dbReference>
<dbReference type="PANTHER" id="PTHR12189:SF2">
    <property type="entry name" value="MRNA CAP GUANINE-N7 METHYLTRANSFERASE"/>
    <property type="match status" value="1"/>
</dbReference>
<dbReference type="PANTHER" id="PTHR12189">
    <property type="entry name" value="MRNA GUANINE-7- METHYLTRANSFERASE"/>
    <property type="match status" value="1"/>
</dbReference>
<dbReference type="Pfam" id="PF21004">
    <property type="entry name" value="MCEL_GT_NTPase"/>
    <property type="match status" value="1"/>
</dbReference>
<dbReference type="Pfam" id="PF21005">
    <property type="entry name" value="MCEL_GT_OB"/>
    <property type="match status" value="1"/>
</dbReference>
<dbReference type="Pfam" id="PF10640">
    <property type="entry name" value="MCEL_TPase"/>
    <property type="match status" value="1"/>
</dbReference>
<dbReference type="Pfam" id="PF03291">
    <property type="entry name" value="mRNA_G-N7_MeTrfase"/>
    <property type="match status" value="1"/>
</dbReference>
<dbReference type="SUPFAM" id="SSF53335">
    <property type="entry name" value="S-adenosyl-L-methionine-dependent methyltransferases"/>
    <property type="match status" value="1"/>
</dbReference>
<dbReference type="PROSITE" id="PS51562">
    <property type="entry name" value="RNA_CAP0_MT"/>
    <property type="match status" value="1"/>
</dbReference>
<organism>
    <name type="scientific">Camelpox virus (strain CMS)</name>
    <dbReference type="NCBI Taxonomy" id="203172"/>
    <lineage>
        <taxon>Viruses</taxon>
        <taxon>Varidnaviria</taxon>
        <taxon>Bamfordvirae</taxon>
        <taxon>Nucleocytoviricota</taxon>
        <taxon>Pokkesviricetes</taxon>
        <taxon>Chitovirales</taxon>
        <taxon>Poxviridae</taxon>
        <taxon>Chordopoxvirinae</taxon>
        <taxon>Orthopoxvirus</taxon>
        <taxon>Camelpox virus</taxon>
    </lineage>
</organism>
<evidence type="ECO:0000250" key="1"/>
<evidence type="ECO:0000250" key="2">
    <source>
        <dbReference type="UniProtKB" id="P04298"/>
    </source>
</evidence>
<evidence type="ECO:0000255" key="3">
    <source>
        <dbReference type="PROSITE-ProRule" id="PRU00895"/>
    </source>
</evidence>
<evidence type="ECO:0000305" key="4"/>
<protein>
    <recommendedName>
        <fullName>mRNA-capping enzyme catalytic subunit</fullName>
    </recommendedName>
    <alternativeName>
        <fullName>Virus termination factor large subunit</fullName>
        <shortName>VTF large subunit</shortName>
    </alternativeName>
    <alternativeName>
        <fullName>mRNA-capping enzyme 97 kDa subunit</fullName>
    </alternativeName>
    <alternativeName>
        <fullName>mRNA-capping enzyme large subunit</fullName>
    </alternativeName>
    <domain>
        <recommendedName>
            <fullName>Polynucleotide 5'-triphosphatase</fullName>
            <ecNumber>3.6.1.74</ecNumber>
        </recommendedName>
        <alternativeName>
            <fullName>mRNA 5'-triphosphatase</fullName>
            <shortName>TPase</shortName>
        </alternativeName>
    </domain>
    <domain>
        <recommendedName>
            <fullName>mRNA guanylyltransferase</fullName>
            <ecNumber>2.7.7.50</ecNumber>
        </recommendedName>
        <alternativeName>
            <fullName>GTP--RNA guanylyltransferase</fullName>
            <shortName>GTase</shortName>
        </alternativeName>
    </domain>
    <domain>
        <recommendedName>
            <fullName>mRNA (guanine-N(7))-methyltransferase</fullName>
            <ecNumber>2.1.1.56</ecNumber>
        </recommendedName>
        <alternativeName>
            <fullName>mRNA cap methyltransferase</fullName>
        </alternativeName>
    </domain>
</protein>
<feature type="chain" id="PRO_0000210127" description="mRNA-capping enzyme catalytic subunit">
    <location>
        <begin position="1"/>
        <end position="844"/>
    </location>
</feature>
<feature type="domain" description="mRNA cap 0 methyltransferase" evidence="3">
    <location>
        <begin position="560"/>
        <end position="844"/>
    </location>
</feature>
<feature type="region of interest" description="Triphosphatase-guanylyltransferase" evidence="1">
    <location>
        <begin position="1"/>
        <end position="539"/>
    </location>
</feature>
<feature type="active site" description="N6-GMP-lysine intermediate" evidence="1">
    <location>
        <position position="260"/>
    </location>
</feature>
<feature type="binding site" evidence="2">
    <location>
        <position position="37"/>
    </location>
    <ligand>
        <name>Mg(2+)</name>
        <dbReference type="ChEBI" id="CHEBI:18420"/>
        <note>catalytic; for RNA triphosphatase activity</note>
    </ligand>
</feature>
<feature type="binding site" evidence="2">
    <location>
        <position position="39"/>
    </location>
    <ligand>
        <name>Mg(2+)</name>
        <dbReference type="ChEBI" id="CHEBI:18420"/>
        <note>catalytic; for RNA triphosphatase activity</note>
    </ligand>
</feature>
<feature type="binding site" evidence="2">
    <location>
        <position position="192"/>
    </location>
    <ligand>
        <name>Mg(2+)</name>
        <dbReference type="ChEBI" id="CHEBI:18420"/>
        <note>catalytic; for RNA triphosphatase activity</note>
    </ligand>
</feature>
<feature type="binding site" evidence="2">
    <location>
        <position position="194"/>
    </location>
    <ligand>
        <name>Mg(2+)</name>
        <dbReference type="ChEBI" id="CHEBI:18420"/>
        <note>catalytic; for RNA triphosphatase activity</note>
    </ligand>
</feature>
<feature type="binding site" evidence="3">
    <location>
        <begin position="549"/>
        <end position="550"/>
    </location>
    <ligand>
        <name>S-adenosyl-L-methionine</name>
        <dbReference type="ChEBI" id="CHEBI:59789"/>
    </ligand>
</feature>
<feature type="binding site" evidence="3">
    <location>
        <begin position="569"/>
        <end position="570"/>
    </location>
    <ligand>
        <name>mRNA</name>
        <dbReference type="ChEBI" id="CHEBI:33699"/>
    </ligand>
    <ligandPart>
        <name>mRNA cap</name>
    </ligandPart>
</feature>
<feature type="binding site" evidence="3">
    <location>
        <position position="573"/>
    </location>
    <ligand>
        <name>S-adenosyl-L-methionine</name>
        <dbReference type="ChEBI" id="CHEBI:59789"/>
    </ligand>
</feature>
<feature type="binding site" evidence="3">
    <location>
        <position position="598"/>
    </location>
    <ligand>
        <name>S-adenosyl-L-methionine</name>
        <dbReference type="ChEBI" id="CHEBI:59789"/>
    </ligand>
</feature>
<feature type="binding site" evidence="3">
    <location>
        <position position="620"/>
    </location>
    <ligand>
        <name>S-adenosyl-L-methionine</name>
        <dbReference type="ChEBI" id="CHEBI:59789"/>
    </ligand>
</feature>
<feature type="binding site" evidence="3">
    <location>
        <begin position="678"/>
        <end position="680"/>
    </location>
    <ligand>
        <name>S-adenosyl-L-methionine</name>
        <dbReference type="ChEBI" id="CHEBI:59789"/>
    </ligand>
</feature>
<feature type="site" description="Essential for RNA triphosphatase activity" evidence="1">
    <location>
        <position position="77"/>
    </location>
</feature>
<feature type="site" description="Essential for RNA triphosphatase activity" evidence="1">
    <location>
        <position position="107"/>
    </location>
</feature>
<feature type="site" description="Essential for RNA triphosphatase activity" evidence="1">
    <location>
        <position position="126"/>
    </location>
</feature>
<feature type="site" description="Essential for RNA triphosphatase activity" evidence="1">
    <location>
        <position position="159"/>
    </location>
</feature>
<feature type="site" description="Essential for RNA triphosphatase activity" evidence="1">
    <location>
        <position position="161"/>
    </location>
</feature>
<feature type="site" description="mRNA cap binding" evidence="3">
    <location>
        <position position="607"/>
    </location>
</feature>
<feature type="site" description="mRNA cap binding" evidence="3">
    <location>
        <position position="632"/>
    </location>
</feature>
<feature type="site" description="mRNA cap binding" evidence="3">
    <location>
        <position position="682"/>
    </location>
</feature>
<feature type="site" description="mRNA cap binding" evidence="3">
    <location>
        <position position="763"/>
    </location>
</feature>
<feature type="site" description="mRNA cap binding" evidence="3">
    <location>
        <position position="836"/>
    </location>
</feature>
<accession>Q775U0</accession>
<reference key="1">
    <citation type="journal article" date="2002" name="J. Gen. Virol.">
        <title>The sequence of camelpox virus shows it is most closely related to variola virus, the cause of smallpox.</title>
        <authorList>
            <person name="Gubser C."/>
            <person name="Smith G.L."/>
        </authorList>
    </citation>
    <scope>NUCLEOTIDE SEQUENCE [LARGE SCALE GENOMIC DNA]</scope>
</reference>
<sequence>MDANVVSSSTIATYIDALAKNASELKQGSTAYEINNELELVFIKPPLITLTNVVNISTIQESFIRFTVTNKEGVKIRTKIPLSKVHGLDVKNVQLVDAIDNIVWEKKSLVTENRLHKECLLRLSTEERHIFLDYKKYGSSIRLELVNLIQAKTKNFTIDFKLKYFLGSGAQSKSSLLHAINHPKSRPNTSLEIEFTPRDNETVPYDELIKELTTLSRHIFMASPENVILSPPINAPINTFMLPKQDIVGLDLENLYAVTKTDGIPITIRVTSKGLYCYFTHLGYIIRYPVKRIIDSEVVVFGEAVKDKNWTVYLIKLIEPVNAISDRLEESKYVESKLVDICDRIVFKSKKYEGPFTTTSEVVDMLSTYLPKQPEGVILFYSKGPKSNIDFKIKKENTIDQTANVVFRYMSSEPIIFGESSIFIEYKKFTNDKGFPKEYGSGKIVLYNGVNYLNNIYCLEYINTHNEVGIKSVVVPIKFIAEFLVNGELLKPRIDKTMKYINSEDYYGNQHNVIVEHLRDQSIKIGDIFNEDKLSDVGHQYANNDKFRLNPEVSYFTNKRTRGPLGILSNYVKTLLISMYCSKTFLDDSNKRKVLAIDFGNGADLEKYFYGEIALLVATDPDADAIARGNERYNRLNSGIKTKYYKFDYIQETIRSDTFVSSVREVFYFGKFNIIDWQFAIHYSFHPRHYATVMNNLSELTASGGKVLITTMDGDKLSKLTDKKTFIIHKNLPSSENYMSVEKIADDRIVVYNPSTMSTPMTEYIIKKNDIVRVFNEYGFVLVDNVDFATIIERSKKFINGASTMEDRPSTRNFFELNRGAIKCEGLDVEDLLSYYVVYVFSKR</sequence>
<gene>
    <name type="ordered locus">CMP103R</name>
</gene>
<organismHost>
    <name type="scientific">Camelus</name>
    <dbReference type="NCBI Taxonomy" id="9836"/>
</organismHost>
<comment type="function">
    <text evidence="1">Catalytic subunit of the mRNA capping enzyme which catalyzes three enzymatic reactions: the 5' triphosphate end of the pre-mRNA is hydrolyzed to a diphosphate by RNA 5' triphosphatase; the diphosphate RNA end is capped with GMP by RNA guanylyltransferase and the GpppN cap is methylated by RNA (guanine-N7) methyltransferase. Heterodimeric mRNA capping enzyme catalyzes the linkage of a N7-methyl-guanosine moiety to the first transcribed nucleotide (cap 0 structure), whereas the polymerase associated VP39 is responsible for a second methylation at the 2'-O position of the ribose (cap 1 structure) (By similarity).</text>
</comment>
<comment type="function">
    <text evidence="1">The heterodimeric enzyme is also involved in early viral gene transcription termination and intermediate viral gene transcription initiation. Early gene transcription termination requires the termination factor VTF, the DNA-dependent ATPase NPH-I and the Rap94 subunit of the viral RNA polymerase, as well as the presence of a specific termination motif. Binds, together with RAP94, to the termination motif 5'-UUUUUNU-3' in the nascent early mRNA (By similarity).</text>
</comment>
<comment type="catalytic activity">
    <reaction evidence="2">
        <text>a 5'-end triphospho-ribonucleoside in mRNA + H2O = a 5'-end diphospho-ribonucleoside in mRNA + phosphate + H(+)</text>
        <dbReference type="Rhea" id="RHEA:67004"/>
        <dbReference type="Rhea" id="RHEA-COMP:17164"/>
        <dbReference type="Rhea" id="RHEA-COMP:17165"/>
        <dbReference type="ChEBI" id="CHEBI:15377"/>
        <dbReference type="ChEBI" id="CHEBI:15378"/>
        <dbReference type="ChEBI" id="CHEBI:43474"/>
        <dbReference type="ChEBI" id="CHEBI:167616"/>
        <dbReference type="ChEBI" id="CHEBI:167618"/>
        <dbReference type="EC" id="3.6.1.74"/>
    </reaction>
    <physiologicalReaction direction="left-to-right" evidence="2">
        <dbReference type="Rhea" id="RHEA:67005"/>
    </physiologicalReaction>
</comment>
<comment type="catalytic activity">
    <reaction>
        <text>a 5'-end diphospho-ribonucleoside in mRNA + GTP + H(+) = a 5'-end (5'-triphosphoguanosine)-ribonucleoside in mRNA + diphosphate</text>
        <dbReference type="Rhea" id="RHEA:67012"/>
        <dbReference type="Rhea" id="RHEA-COMP:17165"/>
        <dbReference type="Rhea" id="RHEA-COMP:17166"/>
        <dbReference type="ChEBI" id="CHEBI:15378"/>
        <dbReference type="ChEBI" id="CHEBI:33019"/>
        <dbReference type="ChEBI" id="CHEBI:37565"/>
        <dbReference type="ChEBI" id="CHEBI:167616"/>
        <dbReference type="ChEBI" id="CHEBI:167617"/>
        <dbReference type="EC" id="2.7.7.50"/>
    </reaction>
</comment>
<comment type="catalytic activity">
    <reaction evidence="3">
        <text>a 5'-end (5'-triphosphoguanosine)-ribonucleoside in mRNA + S-adenosyl-L-methionine = a 5'-end (N(7)-methyl 5'-triphosphoguanosine)-ribonucleoside in mRNA + S-adenosyl-L-homocysteine</text>
        <dbReference type="Rhea" id="RHEA:67008"/>
        <dbReference type="Rhea" id="RHEA-COMP:17166"/>
        <dbReference type="Rhea" id="RHEA-COMP:17167"/>
        <dbReference type="ChEBI" id="CHEBI:57856"/>
        <dbReference type="ChEBI" id="CHEBI:59789"/>
        <dbReference type="ChEBI" id="CHEBI:156461"/>
        <dbReference type="ChEBI" id="CHEBI:167617"/>
        <dbReference type="EC" id="2.1.1.56"/>
    </reaction>
</comment>
<comment type="cofactor">
    <cofactor evidence="2">
        <name>Mg(2+)</name>
        <dbReference type="ChEBI" id="CHEBI:18420"/>
    </cofactor>
</comment>
<comment type="subunit">
    <text evidence="1">Heterodimer of a catalytic and a regulatory subunit. Intrinsic methyltransferase activity of the catalytic subunit is weak and needs to be stimulated 30- to 50-fold by the regulatory subunit, which is itself catalytically inert (By similarity).</text>
</comment>
<comment type="subcellular location">
    <subcellularLocation>
        <location evidence="4">Virion</location>
    </subcellularLocation>
    <text>All the enzymes and other proteins required to synthesize early mRNAs are packaged within the virion core along with the DNA genome.</text>
</comment>
<comment type="domain">
    <text evidence="1">The N-terminus contains the triphosphatase and guanylyltransferase domains, whereas the C-terminus contains the methyltransferase domain. The N-terminus is involved in binding to the termination motif 5'-UUUUUNU-3' in the nascent mRNA (By similarity).</text>
</comment>
<comment type="similarity">
    <text evidence="4">In the N-terminal section; belongs to the dsDNA virus mRNA guanylyltransferase family.</text>
</comment>
<comment type="similarity">
    <text evidence="3">In the C-terminal section; belongs to the class I-like SAM-binding methyltransferase superfamily. mRNA cap 0 methyltransferase family.</text>
</comment>
<proteinExistence type="inferred from homology"/>